<keyword id="KW-0067">ATP-binding</keyword>
<keyword id="KW-0255">Endonuclease</keyword>
<keyword id="KW-0347">Helicase</keyword>
<keyword id="KW-0378">Hydrolase</keyword>
<keyword id="KW-0460">Magnesium</keyword>
<keyword id="KW-0464">Manganese</keyword>
<keyword id="KW-0479">Metal-binding</keyword>
<keyword id="KW-0540">Nuclease</keyword>
<keyword id="KW-0547">Nucleotide-binding</keyword>
<keyword id="KW-0539">Nucleus</keyword>
<keyword id="KW-1185">Reference proteome</keyword>
<keyword id="KW-0677">Repeat</keyword>
<keyword id="KW-0694">RNA-binding</keyword>
<keyword id="KW-0943">RNA-mediated gene silencing</keyword>
<protein>
    <recommendedName>
        <fullName>Endoribonuclease Dicer homolog 2a</fullName>
    </recommendedName>
    <alternativeName>
        <fullName>Dicer-like protein 2a</fullName>
        <shortName>OsDCL2a</shortName>
        <ecNumber>3.1.26.-</ecNumber>
    </alternativeName>
</protein>
<comment type="function">
    <text evidence="1">Probably involved in the RNA silencing pathway. May cleave double-stranded RNA to produce short 21-24 nucleotides (nt) RNAs which target the selective destruction of complementary RNAs (By similarity).</text>
</comment>
<comment type="cofactor">
    <cofactor evidence="1">
        <name>Mg(2+)</name>
        <dbReference type="ChEBI" id="CHEBI:18420"/>
    </cofactor>
    <cofactor evidence="1">
        <name>Mn(2+)</name>
        <dbReference type="ChEBI" id="CHEBI:29035"/>
    </cofactor>
</comment>
<comment type="subunit">
    <text evidence="1">May interact with ARGONAUTE1 or PINHEAD through their common PAZ domains.</text>
</comment>
<comment type="subcellular location">
    <subcellularLocation>
        <location evidence="9">Nucleus</location>
    </subcellularLocation>
</comment>
<comment type="similarity">
    <text evidence="7">Belongs to the helicase family. Dicer subfamily.</text>
</comment>
<comment type="sequence caution" evidence="9">
    <conflict type="erroneous gene model prediction">
        <sequence resource="EMBL-CDS" id="AAS07188"/>
    </conflict>
</comment>
<comment type="sequence caution" evidence="9">
    <conflict type="erroneous gene model prediction">
        <sequence resource="EMBL-CDS" id="AAS07189"/>
    </conflict>
</comment>
<comment type="sequence caution" evidence="9">
    <conflict type="erroneous gene model prediction">
        <sequence resource="EMBL-CDS" id="AAS07190"/>
    </conflict>
</comment>
<name>DCL2A_ORYSJ</name>
<accession>Q10HL3</accession>
<accession>A0A0P0VZP1</accession>
<accession>Q75IB0</accession>
<accession>Q75IB1</accession>
<accession>Q75IB2</accession>
<reference key="1">
    <citation type="journal article" date="2005" name="Genome Res.">
        <title>Sequence, annotation, and analysis of synteny between rice chromosome 3 and diverged grass species.</title>
        <authorList>
            <consortium name="The rice chromosome 3 sequencing consortium"/>
            <person name="Buell C.R."/>
            <person name="Yuan Q."/>
            <person name="Ouyang S."/>
            <person name="Liu J."/>
            <person name="Zhu W."/>
            <person name="Wang A."/>
            <person name="Maiti R."/>
            <person name="Haas B."/>
            <person name="Wortman J."/>
            <person name="Pertea M."/>
            <person name="Jones K.M."/>
            <person name="Kim M."/>
            <person name="Overton L."/>
            <person name="Tsitrin T."/>
            <person name="Fadrosh D."/>
            <person name="Bera J."/>
            <person name="Weaver B."/>
            <person name="Jin S."/>
            <person name="Johri S."/>
            <person name="Reardon M."/>
            <person name="Webb K."/>
            <person name="Hill J."/>
            <person name="Moffat K."/>
            <person name="Tallon L."/>
            <person name="Van Aken S."/>
            <person name="Lewis M."/>
            <person name="Utterback T."/>
            <person name="Feldblyum T."/>
            <person name="Zismann V."/>
            <person name="Iobst S."/>
            <person name="Hsiao J."/>
            <person name="de Vazeille A.R."/>
            <person name="Salzberg S.L."/>
            <person name="White O."/>
            <person name="Fraser C.M."/>
            <person name="Yu Y."/>
            <person name="Kim H."/>
            <person name="Rambo T."/>
            <person name="Currie J."/>
            <person name="Collura K."/>
            <person name="Kernodle-Thompson S."/>
            <person name="Wei F."/>
            <person name="Kudrna K."/>
            <person name="Ammiraju J.S.S."/>
            <person name="Luo M."/>
            <person name="Goicoechea J.L."/>
            <person name="Wing R.A."/>
            <person name="Henry D."/>
            <person name="Oates R."/>
            <person name="Palmer M."/>
            <person name="Pries G."/>
            <person name="Saski C."/>
            <person name="Simmons J."/>
            <person name="Soderlund C."/>
            <person name="Nelson W."/>
            <person name="de la Bastide M."/>
            <person name="Spiegel L."/>
            <person name="Nascimento L."/>
            <person name="Huang E."/>
            <person name="Preston R."/>
            <person name="Zutavern T."/>
            <person name="Palmer L."/>
            <person name="O'Shaughnessy A."/>
            <person name="Dike S."/>
            <person name="McCombie W.R."/>
            <person name="Minx P."/>
            <person name="Cordum H."/>
            <person name="Wilson R."/>
            <person name="Jin W."/>
            <person name="Lee H.R."/>
            <person name="Jiang J."/>
            <person name="Jackson S."/>
        </authorList>
    </citation>
    <scope>NUCLEOTIDE SEQUENCE [LARGE SCALE GENOMIC DNA]</scope>
    <source>
        <strain>cv. Nipponbare</strain>
    </source>
</reference>
<reference key="2">
    <citation type="journal article" date="2005" name="Nature">
        <title>The map-based sequence of the rice genome.</title>
        <authorList>
            <consortium name="International rice genome sequencing project (IRGSP)"/>
        </authorList>
    </citation>
    <scope>NUCLEOTIDE SEQUENCE [LARGE SCALE GENOMIC DNA]</scope>
    <source>
        <strain>cv. Nipponbare</strain>
    </source>
</reference>
<reference key="3">
    <citation type="journal article" date="2008" name="Nucleic Acids Res.">
        <title>The rice annotation project database (RAP-DB): 2008 update.</title>
        <authorList>
            <consortium name="The rice annotation project (RAP)"/>
        </authorList>
    </citation>
    <scope>GENOME REANNOTATION</scope>
    <source>
        <strain>cv. Nipponbare</strain>
    </source>
</reference>
<reference key="4">
    <citation type="journal article" date="2013" name="Rice">
        <title>Improvement of the Oryza sativa Nipponbare reference genome using next generation sequence and optical map data.</title>
        <authorList>
            <person name="Kawahara Y."/>
            <person name="de la Bastide M."/>
            <person name="Hamilton J.P."/>
            <person name="Kanamori H."/>
            <person name="McCombie W.R."/>
            <person name="Ouyang S."/>
            <person name="Schwartz D.C."/>
            <person name="Tanaka T."/>
            <person name="Wu J."/>
            <person name="Zhou S."/>
            <person name="Childs K.L."/>
            <person name="Davidson R.M."/>
            <person name="Lin H."/>
            <person name="Quesada-Ocampo L."/>
            <person name="Vaillancourt B."/>
            <person name="Sakai H."/>
            <person name="Lee S.S."/>
            <person name="Kim J."/>
            <person name="Numa H."/>
            <person name="Itoh T."/>
            <person name="Buell C.R."/>
            <person name="Matsumoto T."/>
        </authorList>
    </citation>
    <scope>GENOME REANNOTATION</scope>
    <source>
        <strain>cv. Nipponbare</strain>
    </source>
</reference>
<reference key="5">
    <citation type="journal article" date="2003" name="Science">
        <title>Collection, mapping, and annotation of over 28,000 cDNA clones from japonica rice.</title>
        <authorList>
            <consortium name="The rice full-length cDNA consortium"/>
        </authorList>
    </citation>
    <scope>NUCLEOTIDE SEQUENCE [LARGE SCALE MRNA]</scope>
    <source>
        <strain>cv. Nipponbare</strain>
    </source>
</reference>
<reference key="6">
    <citation type="journal article" date="2008" name="BMC Genomics">
        <title>Genome-wide identification, organization and phylogenetic analysis of dicer-like, argonaute and RNA-dependent RNA polymerase gene families and their expression analysis during reproductive development and stress in rice.</title>
        <authorList>
            <person name="Kapoor M."/>
            <person name="Arora R."/>
            <person name="Lama T."/>
            <person name="Nijhawan A."/>
            <person name="Khurana J.P."/>
            <person name="Tyagi A.K."/>
            <person name="Kapoor S."/>
        </authorList>
    </citation>
    <scope>GENE FAMILY</scope>
    <scope>NOMENCLATURE</scope>
</reference>
<dbReference type="EC" id="3.1.26.-"/>
<dbReference type="EMBL" id="AC133333">
    <property type="protein sequence ID" value="AAS07188.1"/>
    <property type="status" value="ALT_SEQ"/>
    <property type="molecule type" value="Genomic_DNA"/>
</dbReference>
<dbReference type="EMBL" id="AC133333">
    <property type="protein sequence ID" value="AAS07189.1"/>
    <property type="status" value="ALT_SEQ"/>
    <property type="molecule type" value="Genomic_DNA"/>
</dbReference>
<dbReference type="EMBL" id="AC133333">
    <property type="protein sequence ID" value="AAS07190.1"/>
    <property type="status" value="ALT_SEQ"/>
    <property type="molecule type" value="Genomic_DNA"/>
</dbReference>
<dbReference type="EMBL" id="DP000009">
    <property type="protein sequence ID" value="ABF97330.1"/>
    <property type="molecule type" value="Genomic_DNA"/>
</dbReference>
<dbReference type="EMBL" id="AP008209">
    <property type="protein sequence ID" value="BAF12478.1"/>
    <property type="molecule type" value="Genomic_DNA"/>
</dbReference>
<dbReference type="EMBL" id="AP014959">
    <property type="protein sequence ID" value="BAS85077.1"/>
    <property type="molecule type" value="Genomic_DNA"/>
</dbReference>
<dbReference type="EMBL" id="AK072334">
    <property type="protein sequence ID" value="BAG92928.1"/>
    <property type="molecule type" value="mRNA"/>
</dbReference>
<dbReference type="RefSeq" id="XP_015630302.1">
    <property type="nucleotide sequence ID" value="XM_015774816.1"/>
</dbReference>
<dbReference type="SMR" id="Q10HL3"/>
<dbReference type="FunCoup" id="Q10HL3">
    <property type="interactions" value="2023"/>
</dbReference>
<dbReference type="STRING" id="39947.Q10HL3"/>
<dbReference type="PaxDb" id="39947-Q10HL3"/>
<dbReference type="EnsemblPlants" id="Os03t0583900-01">
    <property type="protein sequence ID" value="Os03t0583900-01"/>
    <property type="gene ID" value="Os03g0583900"/>
</dbReference>
<dbReference type="Gramene" id="Os03t0583900-01">
    <property type="protein sequence ID" value="Os03t0583900-01"/>
    <property type="gene ID" value="Os03g0583900"/>
</dbReference>
<dbReference type="KEGG" id="dosa:Os03g0583900"/>
<dbReference type="eggNOG" id="KOG0701">
    <property type="taxonomic scope" value="Eukaryota"/>
</dbReference>
<dbReference type="HOGENOM" id="CLU_000907_4_4_1"/>
<dbReference type="InParanoid" id="Q10HL3"/>
<dbReference type="OMA" id="HFCAVIP"/>
<dbReference type="OrthoDB" id="6513042at2759"/>
<dbReference type="Proteomes" id="UP000000763">
    <property type="component" value="Chromosome 3"/>
</dbReference>
<dbReference type="Proteomes" id="UP000059680">
    <property type="component" value="Chromosome 3"/>
</dbReference>
<dbReference type="ExpressionAtlas" id="Q10HL3">
    <property type="expression patterns" value="baseline and differential"/>
</dbReference>
<dbReference type="GO" id="GO:0005737">
    <property type="term" value="C:cytoplasm"/>
    <property type="evidence" value="ECO:0000318"/>
    <property type="project" value="GO_Central"/>
</dbReference>
<dbReference type="GO" id="GO:0005634">
    <property type="term" value="C:nucleus"/>
    <property type="evidence" value="ECO:0000318"/>
    <property type="project" value="GO_Central"/>
</dbReference>
<dbReference type="GO" id="GO:0005524">
    <property type="term" value="F:ATP binding"/>
    <property type="evidence" value="ECO:0007669"/>
    <property type="project" value="UniProtKB-KW"/>
</dbReference>
<dbReference type="GO" id="GO:0004386">
    <property type="term" value="F:helicase activity"/>
    <property type="evidence" value="ECO:0007669"/>
    <property type="project" value="UniProtKB-KW"/>
</dbReference>
<dbReference type="GO" id="GO:0046872">
    <property type="term" value="F:metal ion binding"/>
    <property type="evidence" value="ECO:0007669"/>
    <property type="project" value="UniProtKB-KW"/>
</dbReference>
<dbReference type="GO" id="GO:0004525">
    <property type="term" value="F:ribonuclease III activity"/>
    <property type="evidence" value="ECO:0000318"/>
    <property type="project" value="GO_Central"/>
</dbReference>
<dbReference type="GO" id="GO:0003723">
    <property type="term" value="F:RNA binding"/>
    <property type="evidence" value="ECO:0000318"/>
    <property type="project" value="GO_Central"/>
</dbReference>
<dbReference type="GO" id="GO:0030422">
    <property type="term" value="P:siRNA processing"/>
    <property type="evidence" value="ECO:0000318"/>
    <property type="project" value="GO_Central"/>
</dbReference>
<dbReference type="CDD" id="cd18034">
    <property type="entry name" value="DEXHc_dicer"/>
    <property type="match status" value="1"/>
</dbReference>
<dbReference type="CDD" id="cd02844">
    <property type="entry name" value="PAZ_CAF_like"/>
    <property type="match status" value="1"/>
</dbReference>
<dbReference type="CDD" id="cd00593">
    <property type="entry name" value="RIBOc"/>
    <property type="match status" value="2"/>
</dbReference>
<dbReference type="FunFam" id="2.170.260.10:FF:000007">
    <property type="entry name" value="Dicer-like 105"/>
    <property type="match status" value="1"/>
</dbReference>
<dbReference type="FunFam" id="1.10.1520.10:FF:000013">
    <property type="entry name" value="Endoribonuclease Dicer homolog 2"/>
    <property type="match status" value="1"/>
</dbReference>
<dbReference type="FunFam" id="1.10.1520.10:FF:000004">
    <property type="entry name" value="Endoribonuclease dicer-like 1"/>
    <property type="match status" value="1"/>
</dbReference>
<dbReference type="FunFam" id="3.30.160.380:FF:000001">
    <property type="entry name" value="Endoribonuclease dicer-like 1"/>
    <property type="match status" value="1"/>
</dbReference>
<dbReference type="FunFam" id="3.40.50.300:FF:000420">
    <property type="entry name" value="Endoribonuclease dicer-like 1"/>
    <property type="match status" value="1"/>
</dbReference>
<dbReference type="FunFam" id="3.40.50.300:FF:000705">
    <property type="entry name" value="Endoribonuclease dicer-like protein"/>
    <property type="match status" value="1"/>
</dbReference>
<dbReference type="Gene3D" id="3.30.160.20">
    <property type="match status" value="1"/>
</dbReference>
<dbReference type="Gene3D" id="3.30.160.380">
    <property type="entry name" value="Dicer dimerisation domain"/>
    <property type="match status" value="1"/>
</dbReference>
<dbReference type="Gene3D" id="3.40.50.300">
    <property type="entry name" value="P-loop containing nucleotide triphosphate hydrolases"/>
    <property type="match status" value="2"/>
</dbReference>
<dbReference type="Gene3D" id="2.170.260.10">
    <property type="entry name" value="paz domain"/>
    <property type="match status" value="1"/>
</dbReference>
<dbReference type="Gene3D" id="1.10.1520.10">
    <property type="entry name" value="Ribonuclease III domain"/>
    <property type="match status" value="2"/>
</dbReference>
<dbReference type="InterPro" id="IPR011545">
    <property type="entry name" value="DEAD/DEAH_box_helicase_dom"/>
</dbReference>
<dbReference type="InterPro" id="IPR038248">
    <property type="entry name" value="Dicer_dimer_sf"/>
</dbReference>
<dbReference type="InterPro" id="IPR005034">
    <property type="entry name" value="Dicer_dimerisation_dom"/>
</dbReference>
<dbReference type="InterPro" id="IPR014720">
    <property type="entry name" value="dsRBD_dom"/>
</dbReference>
<dbReference type="InterPro" id="IPR014001">
    <property type="entry name" value="Helicase_ATP-bd"/>
</dbReference>
<dbReference type="InterPro" id="IPR001650">
    <property type="entry name" value="Helicase_C-like"/>
</dbReference>
<dbReference type="InterPro" id="IPR027417">
    <property type="entry name" value="P-loop_NTPase"/>
</dbReference>
<dbReference type="InterPro" id="IPR003100">
    <property type="entry name" value="PAZ_dom"/>
</dbReference>
<dbReference type="InterPro" id="IPR036085">
    <property type="entry name" value="PAZ_dom_sf"/>
</dbReference>
<dbReference type="InterPro" id="IPR000999">
    <property type="entry name" value="RNase_III_dom"/>
</dbReference>
<dbReference type="InterPro" id="IPR036389">
    <property type="entry name" value="RNase_III_sf"/>
</dbReference>
<dbReference type="PANTHER" id="PTHR14950">
    <property type="entry name" value="DICER-RELATED"/>
    <property type="match status" value="1"/>
</dbReference>
<dbReference type="PANTHER" id="PTHR14950:SF70">
    <property type="entry name" value="ENDORIBONUCLEASE DICER HOMOLOG 2"/>
    <property type="match status" value="1"/>
</dbReference>
<dbReference type="Pfam" id="PF00270">
    <property type="entry name" value="DEAD"/>
    <property type="match status" value="1"/>
</dbReference>
<dbReference type="Pfam" id="PF03368">
    <property type="entry name" value="Dicer_dimer"/>
    <property type="match status" value="1"/>
</dbReference>
<dbReference type="Pfam" id="PF00035">
    <property type="entry name" value="dsrm"/>
    <property type="match status" value="1"/>
</dbReference>
<dbReference type="Pfam" id="PF00271">
    <property type="entry name" value="Helicase_C"/>
    <property type="match status" value="1"/>
</dbReference>
<dbReference type="Pfam" id="PF02170">
    <property type="entry name" value="PAZ"/>
    <property type="match status" value="1"/>
</dbReference>
<dbReference type="Pfam" id="PF00636">
    <property type="entry name" value="Ribonuclease_3"/>
    <property type="match status" value="2"/>
</dbReference>
<dbReference type="SMART" id="SM00487">
    <property type="entry name" value="DEXDc"/>
    <property type="match status" value="1"/>
</dbReference>
<dbReference type="SMART" id="SM00358">
    <property type="entry name" value="DSRM"/>
    <property type="match status" value="1"/>
</dbReference>
<dbReference type="SMART" id="SM00490">
    <property type="entry name" value="HELICc"/>
    <property type="match status" value="1"/>
</dbReference>
<dbReference type="SMART" id="SM00949">
    <property type="entry name" value="PAZ"/>
    <property type="match status" value="1"/>
</dbReference>
<dbReference type="SMART" id="SM00535">
    <property type="entry name" value="RIBOc"/>
    <property type="match status" value="2"/>
</dbReference>
<dbReference type="SUPFAM" id="SSF54768">
    <property type="entry name" value="dsRNA-binding domain-like"/>
    <property type="match status" value="1"/>
</dbReference>
<dbReference type="SUPFAM" id="SSF52540">
    <property type="entry name" value="P-loop containing nucleoside triphosphate hydrolases"/>
    <property type="match status" value="1"/>
</dbReference>
<dbReference type="SUPFAM" id="SSF101690">
    <property type="entry name" value="PAZ domain"/>
    <property type="match status" value="1"/>
</dbReference>
<dbReference type="SUPFAM" id="SSF69065">
    <property type="entry name" value="RNase III domain-like"/>
    <property type="match status" value="2"/>
</dbReference>
<dbReference type="PROSITE" id="PS51327">
    <property type="entry name" value="DICER_DSRBF"/>
    <property type="match status" value="1"/>
</dbReference>
<dbReference type="PROSITE" id="PS50137">
    <property type="entry name" value="DS_RBD"/>
    <property type="match status" value="1"/>
</dbReference>
<dbReference type="PROSITE" id="PS51192">
    <property type="entry name" value="HELICASE_ATP_BIND_1"/>
    <property type="match status" value="1"/>
</dbReference>
<dbReference type="PROSITE" id="PS51194">
    <property type="entry name" value="HELICASE_CTER"/>
    <property type="match status" value="1"/>
</dbReference>
<dbReference type="PROSITE" id="PS50821">
    <property type="entry name" value="PAZ"/>
    <property type="match status" value="1"/>
</dbReference>
<dbReference type="PROSITE" id="PS00517">
    <property type="entry name" value="RNASE_3_1"/>
    <property type="match status" value="1"/>
</dbReference>
<dbReference type="PROSITE" id="PS50142">
    <property type="entry name" value="RNASE_3_2"/>
    <property type="match status" value="2"/>
</dbReference>
<proteinExistence type="evidence at transcript level"/>
<feature type="chain" id="PRO_0000378417" description="Endoribonuclease Dicer homolog 2a">
    <location>
        <begin position="1"/>
        <end position="1410"/>
    </location>
</feature>
<feature type="domain" description="Helicase ATP-binding" evidence="5">
    <location>
        <begin position="41"/>
        <end position="222"/>
    </location>
</feature>
<feature type="domain" description="Helicase C-terminal" evidence="6">
    <location>
        <begin position="388"/>
        <end position="561"/>
    </location>
</feature>
<feature type="domain" description="Dicer dsRNA-binding fold" evidence="7">
    <location>
        <begin position="569"/>
        <end position="655"/>
    </location>
</feature>
<feature type="domain" description="PAZ" evidence="2">
    <location>
        <begin position="827"/>
        <end position="942"/>
    </location>
</feature>
<feature type="domain" description="RNase III 1" evidence="3">
    <location>
        <begin position="969"/>
        <end position="1124"/>
    </location>
</feature>
<feature type="domain" description="RNase III 2" evidence="3">
    <location>
        <begin position="1161"/>
        <end position="1308"/>
    </location>
</feature>
<feature type="domain" description="DRBM" evidence="4">
    <location>
        <begin position="1334"/>
        <end position="1400"/>
    </location>
</feature>
<feature type="region of interest" description="Disordered" evidence="8">
    <location>
        <begin position="1"/>
        <end position="30"/>
    </location>
</feature>
<feature type="short sequence motif" description="DECH box" evidence="1">
    <location>
        <begin position="163"/>
        <end position="166"/>
    </location>
</feature>
<feature type="compositionally biased region" description="Gly residues" evidence="8">
    <location>
        <begin position="1"/>
        <end position="15"/>
    </location>
</feature>
<feature type="binding site" evidence="5">
    <location>
        <begin position="54"/>
        <end position="61"/>
    </location>
    <ligand>
        <name>ATP</name>
        <dbReference type="ChEBI" id="CHEBI:30616"/>
    </ligand>
</feature>
<feature type="binding site" evidence="1">
    <location>
        <position position="1200"/>
    </location>
    <ligand>
        <name>Mg(2+)</name>
        <dbReference type="ChEBI" id="CHEBI:18420"/>
    </ligand>
</feature>
<feature type="binding site" evidence="1">
    <location>
        <position position="1294"/>
    </location>
    <ligand>
        <name>Mg(2+)</name>
        <dbReference type="ChEBI" id="CHEBI:18420"/>
    </ligand>
</feature>
<feature type="binding site" evidence="1">
    <location>
        <position position="1297"/>
    </location>
    <ligand>
        <name>Mg(2+)</name>
        <dbReference type="ChEBI" id="CHEBI:18420"/>
    </ligand>
</feature>
<feature type="site" description="Important for activity" evidence="1">
    <location>
        <position position="1290"/>
    </location>
</feature>
<gene>
    <name type="primary">DCL2A</name>
    <name type="ordered locus">Os03g0583900</name>
    <name type="ordered locus">LOC_Os03g38740</name>
    <name type="ORF">OJ1785_A05.30</name>
</gene>
<evidence type="ECO:0000250" key="1"/>
<evidence type="ECO:0000255" key="2">
    <source>
        <dbReference type="PROSITE-ProRule" id="PRU00142"/>
    </source>
</evidence>
<evidence type="ECO:0000255" key="3">
    <source>
        <dbReference type="PROSITE-ProRule" id="PRU00177"/>
    </source>
</evidence>
<evidence type="ECO:0000255" key="4">
    <source>
        <dbReference type="PROSITE-ProRule" id="PRU00266"/>
    </source>
</evidence>
<evidence type="ECO:0000255" key="5">
    <source>
        <dbReference type="PROSITE-ProRule" id="PRU00541"/>
    </source>
</evidence>
<evidence type="ECO:0000255" key="6">
    <source>
        <dbReference type="PROSITE-ProRule" id="PRU00542"/>
    </source>
</evidence>
<evidence type="ECO:0000255" key="7">
    <source>
        <dbReference type="PROSITE-ProRule" id="PRU00657"/>
    </source>
</evidence>
<evidence type="ECO:0000256" key="8">
    <source>
        <dbReference type="SAM" id="MobiDB-lite"/>
    </source>
</evidence>
<evidence type="ECO:0000305" key="9"/>
<sequence length="1410" mass="158494">MGGPLTAAGGRGDGGAKAVEPLRPPPPPDPKTMARWYQLEALERAVRGNTLAFLETGSGKTLIAVMLLRAYAHRVRRPDSRRFAVFLVPTVVLVGQQARVVEQHTDLVVKQFCGEMGVDFWDAATWRSQLEDGEVLVMTPQILLDNLRHSFFRLQDIALLIFDECHHARGNTPYACIFKEFYHPQLNSSASDPLPRIFGMSASLIYSKDLNPHNYSKQISEIENLMNSKVYTVDSESALSEYIPFASTKIVDFDDSNISSELHANILSCLNRLNKKHIEALDRKLHGSSLENAKQRISKLHHTFVYCLYNLGVWLAAKAAEVQSYEENSLSFWGETLDKNVEGFIRNYSEEVHRELSCFLKNGHIGEKFPADSQDGILTPKVHCLIRTLLQYRHMQDLRCIVFVERVITSIVLEHLLSSIHQMSGWNVKHMAGSRPGLLSQSRKNHTEIVESFRKGKVHIIIATQILEEGLDVPSCNLVIRFDPSATVCSFIQSRGRARMENSDYLLLVGRGDVEAQTNAEKFLASGQIMREESLRLGSISCQPLENTLCEDTYYRVESTRAIVTLNSSVPLIHFFCSKLPSDEYFNPLPRFDIDKASGTCTLHLPKSSPVQTVNVEGEGSILKETVCLKACQELHAIGALTDSLLPELDVPCDEEPDIVVENKIEQPSYFPEEFVDNWRSFSRLGIYYCYKISLEGCPKTASPTDILLALKCDLGSDFTSSSFKLPGGQDNASVTMKYVGIIHLNQEQVIIARRFQTTILSFLIGDDHLEVSNGIKYFHEMQVPIGVVYLLLPLVSGRIDWCSMKFSSSPIYEANNKHMTHCHSCKDIDLLQTKDGPFCRCILKNSIVCTPHNNIFYVISGFLDLDANSCLPQHDGTVVTYKDYFKTRHGLTLTFENQPLLAGSKHVKVRNFLHNCYSKKEKEPGDRYSVELPPELCRIIMSPVSANNLHIFSYVPSIMFRIQCMLLSVKLKVQLGPTVQQFDVPVLKILEALTTKKCQEEFSQESLETLGDSFLKYVTTRHLFSEYRLQHEGILTKMKKNLISNAALCQLACSSNLVGYIHAEEFNPRDWIIPCLDYDERDNKKISFLAPNGMYSQRKMSIKSKRIADSVEALIGAYLSTAGEKAAFLLMKSLGMNIEFHTEIPVERKISMKAEEFINVRSLEGMLGYKFNDSLLLLEALTHGSYQTSGPTSCYQRLEFLGDAILDHLFTEYYYSKYPDCTPELLTDLRSASVNNNCYAHAAVKSGLNKHILHSSSELHRKMSYYLEEFGQSFTGPSYGWEAGIGLPKVLGDVIESIAGAIYLDSKCDKEVVWRSMKRLLEPLATPETIEPDPVKGLQEFCDRRSFKITYEKNHVDGVSSVIARVKAGETTYSATKSGPCKLVAKKLASKAVLKDLIAGHKDTEAAAV</sequence>
<organism>
    <name type="scientific">Oryza sativa subsp. japonica</name>
    <name type="common">Rice</name>
    <dbReference type="NCBI Taxonomy" id="39947"/>
    <lineage>
        <taxon>Eukaryota</taxon>
        <taxon>Viridiplantae</taxon>
        <taxon>Streptophyta</taxon>
        <taxon>Embryophyta</taxon>
        <taxon>Tracheophyta</taxon>
        <taxon>Spermatophyta</taxon>
        <taxon>Magnoliopsida</taxon>
        <taxon>Liliopsida</taxon>
        <taxon>Poales</taxon>
        <taxon>Poaceae</taxon>
        <taxon>BOP clade</taxon>
        <taxon>Oryzoideae</taxon>
        <taxon>Oryzeae</taxon>
        <taxon>Oryzinae</taxon>
        <taxon>Oryza</taxon>
        <taxon>Oryza sativa</taxon>
    </lineage>
</organism>